<gene>
    <name evidence="9" type="primary">TMEM114</name>
</gene>
<sequence>MRVHLGGLAGAAALTGALSFVLLAAAIGTDFWYIIDTERLERTGPGAQDLLGSINRSQPEPLSSHSGLWRTCRVQSPCTPLMNPFRLENVTVSESSRQLLTMHGTFVILLPLSLILMVFGGMTGFLSFLLQAYLLLLLTGILFLFGAMVTLAGISVYIAYSAAAFREALCLLEEKALLDQVDISFGWSLALGWISFIAELLTGAAFLAAARELSLRRRQDQAI</sequence>
<accession>B3SHH9</accession>
<protein>
    <recommendedName>
        <fullName evidence="9">Transmembrane protein 114</fullName>
    </recommendedName>
    <alternativeName>
        <fullName evidence="6">Claudin-26</fullName>
    </alternativeName>
</protein>
<organism>
    <name type="scientific">Homo sapiens</name>
    <name type="common">Human</name>
    <dbReference type="NCBI Taxonomy" id="9606"/>
    <lineage>
        <taxon>Eukaryota</taxon>
        <taxon>Metazoa</taxon>
        <taxon>Chordata</taxon>
        <taxon>Craniata</taxon>
        <taxon>Vertebrata</taxon>
        <taxon>Euteleostomi</taxon>
        <taxon>Mammalia</taxon>
        <taxon>Eutheria</taxon>
        <taxon>Euarchontoglires</taxon>
        <taxon>Primates</taxon>
        <taxon>Haplorrhini</taxon>
        <taxon>Catarrhini</taxon>
        <taxon>Hominidae</taxon>
        <taxon>Homo</taxon>
    </lineage>
</organism>
<dbReference type="EMBL" id="EF424218">
    <property type="protein sequence ID" value="ABN55916.1"/>
    <property type="molecule type" value="Genomic_DNA"/>
</dbReference>
<dbReference type="EMBL" id="BF727259">
    <property type="status" value="NOT_ANNOTATED_CDS"/>
    <property type="molecule type" value="mRNA"/>
</dbReference>
<dbReference type="EMBL" id="BC150511">
    <property type="status" value="NOT_ANNOTATED_CDS"/>
    <property type="molecule type" value="mRNA"/>
</dbReference>
<dbReference type="CCDS" id="CCDS73825.1"/>
<dbReference type="RefSeq" id="NP_001139808.1">
    <property type="nucleotide sequence ID" value="NM_001146336.2"/>
</dbReference>
<dbReference type="BioGRID" id="129713">
    <property type="interactions" value="2"/>
</dbReference>
<dbReference type="FunCoup" id="B3SHH9">
    <property type="interactions" value="13"/>
</dbReference>
<dbReference type="IntAct" id="B3SHH9">
    <property type="interactions" value="2"/>
</dbReference>
<dbReference type="STRING" id="9606.ENSP00000484263"/>
<dbReference type="GlyCosmos" id="B3SHH9">
    <property type="glycosylation" value="2 sites, No reported glycans"/>
</dbReference>
<dbReference type="GlyGen" id="B3SHH9">
    <property type="glycosylation" value="2 sites"/>
</dbReference>
<dbReference type="iPTMnet" id="B3SHH9"/>
<dbReference type="PhosphoSitePlus" id="B3SHH9"/>
<dbReference type="BioMuta" id="TMEM114"/>
<dbReference type="PaxDb" id="9606-ENSP00000484263"/>
<dbReference type="PeptideAtlas" id="B3SHH9"/>
<dbReference type="Antibodypedia" id="51871">
    <property type="antibodies" value="11 antibodies from 9 providers"/>
</dbReference>
<dbReference type="DNASU" id="283953"/>
<dbReference type="Ensembl" id="ENST00000620492.5">
    <property type="protein sequence ID" value="ENSP00000484263.1"/>
    <property type="gene ID" value="ENSG00000232258.7"/>
</dbReference>
<dbReference type="GeneID" id="283953"/>
<dbReference type="KEGG" id="hsa:283953"/>
<dbReference type="MANE-Select" id="ENST00000620492.5">
    <property type="protein sequence ID" value="ENSP00000484263.1"/>
    <property type="RefSeq nucleotide sequence ID" value="NM_001146336.2"/>
    <property type="RefSeq protein sequence ID" value="NP_001139808.1"/>
</dbReference>
<dbReference type="UCSC" id="uc032dql.1">
    <property type="organism name" value="human"/>
</dbReference>
<dbReference type="AGR" id="HGNC:33227"/>
<dbReference type="CTD" id="283953"/>
<dbReference type="DisGeNET" id="283953"/>
<dbReference type="GeneCards" id="TMEM114"/>
<dbReference type="HGNC" id="HGNC:33227">
    <property type="gene designation" value="TMEM114"/>
</dbReference>
<dbReference type="HPA" id="ENSG00000232258">
    <property type="expression patterns" value="Tissue enriched (seminal)"/>
</dbReference>
<dbReference type="MalaCards" id="TMEM114"/>
<dbReference type="MIM" id="611579">
    <property type="type" value="gene"/>
</dbReference>
<dbReference type="neXtProt" id="NX_B3SHH9"/>
<dbReference type="OpenTargets" id="ENSG00000232258"/>
<dbReference type="PharmGKB" id="PA162405852"/>
<dbReference type="VEuPathDB" id="HostDB:ENSG00000232258"/>
<dbReference type="eggNOG" id="ENOG502QR97">
    <property type="taxonomic scope" value="Eukaryota"/>
</dbReference>
<dbReference type="GeneTree" id="ENSGT00390000011615"/>
<dbReference type="HOGENOM" id="CLU_102991_0_0_1"/>
<dbReference type="InParanoid" id="B3SHH9"/>
<dbReference type="OMA" id="CVYVAYS"/>
<dbReference type="OrthoDB" id="9626630at2759"/>
<dbReference type="PAN-GO" id="B3SHH9">
    <property type="GO annotations" value="1 GO annotation based on evolutionary models"/>
</dbReference>
<dbReference type="PhylomeDB" id="B3SHH9"/>
<dbReference type="PathwayCommons" id="B3SHH9"/>
<dbReference type="SignaLink" id="B3SHH9"/>
<dbReference type="BioGRID-ORCS" id="283953">
    <property type="hits" value="9 hits in 279 CRISPR screens"/>
</dbReference>
<dbReference type="ChiTaRS" id="TMEM114">
    <property type="organism name" value="human"/>
</dbReference>
<dbReference type="GenomeRNAi" id="283953"/>
<dbReference type="Pharos" id="B3SHH9">
    <property type="development level" value="Tdark"/>
</dbReference>
<dbReference type="PRO" id="PR:B3SHH9"/>
<dbReference type="Proteomes" id="UP000005640">
    <property type="component" value="Chromosome 16"/>
</dbReference>
<dbReference type="RNAct" id="B3SHH9">
    <property type="molecule type" value="protein"/>
</dbReference>
<dbReference type="Bgee" id="ENSG00000232258">
    <property type="expression patterns" value="Expressed in male germ line stem cell (sensu Vertebrata) in testis and 53 other cell types or tissues"/>
</dbReference>
<dbReference type="ExpressionAtlas" id="B3SHH9">
    <property type="expression patterns" value="baseline and differential"/>
</dbReference>
<dbReference type="GO" id="GO:0016324">
    <property type="term" value="C:apical plasma membrane"/>
    <property type="evidence" value="ECO:0000318"/>
    <property type="project" value="GO_Central"/>
</dbReference>
<dbReference type="GO" id="GO:0016327">
    <property type="term" value="C:apicolateral plasma membrane"/>
    <property type="evidence" value="ECO:0007669"/>
    <property type="project" value="Ensembl"/>
</dbReference>
<dbReference type="FunFam" id="1.20.140.150:FF:000046">
    <property type="entry name" value="Transmembrane protein 114"/>
    <property type="match status" value="1"/>
</dbReference>
<dbReference type="FunFam" id="1.20.140.150:FF:000059">
    <property type="entry name" value="Transmembrane protein 114"/>
    <property type="match status" value="1"/>
</dbReference>
<dbReference type="Gene3D" id="1.20.140.150">
    <property type="match status" value="1"/>
</dbReference>
<dbReference type="InterPro" id="IPR004031">
    <property type="entry name" value="PMP22/EMP/MP20/Claudin"/>
</dbReference>
<dbReference type="InterPro" id="IPR039951">
    <property type="entry name" value="TMEM114/TMEM235"/>
</dbReference>
<dbReference type="PANTHER" id="PTHR20516:SF2">
    <property type="entry name" value="TRANSMEMBRANE PROTEIN 114"/>
    <property type="match status" value="1"/>
</dbReference>
<dbReference type="PANTHER" id="PTHR20516">
    <property type="entry name" value="TRANSMEMBRANE PROTEIN 114/235 FAMILY MEMBER"/>
    <property type="match status" value="1"/>
</dbReference>
<dbReference type="Pfam" id="PF13903">
    <property type="entry name" value="Claudin_2"/>
    <property type="match status" value="1"/>
</dbReference>
<name>TM114_HUMAN</name>
<comment type="interaction">
    <interactant intactId="EBI-19132172">
        <id>B3SHH9</id>
    </interactant>
    <interactant intactId="EBI-4319440">
        <id>P54849</id>
        <label>EMP1</label>
    </interactant>
    <organismsDiffer>false</organismsDiffer>
    <experiments>3</experiments>
</comment>
<comment type="subcellular location">
    <subcellularLocation>
        <location evidence="2">Cell junction</location>
        <location evidence="2">Tight junction</location>
    </subcellularLocation>
    <subcellularLocation>
        <location evidence="2">Lateral cell membrane</location>
        <topology evidence="3">Multi-pass membrane protein</topology>
    </subcellularLocation>
    <subcellularLocation>
        <location evidence="2">Apical cell membrane</location>
        <topology evidence="3">Multi-pass membrane protein</topology>
    </subcellularLocation>
</comment>
<comment type="developmental stage">
    <text evidence="5">Detected in the eye at gestational days 53-54 and at gestational week 10.</text>
</comment>
<comment type="disease">
    <text evidence="4">Chromosomal aberrations involving TMEM114 may be a cause of congenital and juvenile cataracts. Translocation t(16;22) (p13.3;q11.2).</text>
</comment>
<comment type="similarity">
    <text evidence="7">Belongs to the PMP-22/EMP/MP20 family.</text>
</comment>
<keyword id="KW-0965">Cell junction</keyword>
<keyword id="KW-1003">Cell membrane</keyword>
<keyword id="KW-0160">Chromosomal rearrangement</keyword>
<keyword id="KW-0325">Glycoprotein</keyword>
<keyword id="KW-0472">Membrane</keyword>
<keyword id="KW-1185">Reference proteome</keyword>
<keyword id="KW-0796">Tight junction</keyword>
<keyword id="KW-0812">Transmembrane</keyword>
<keyword id="KW-1133">Transmembrane helix</keyword>
<reference evidence="7 8" key="1">
    <citation type="journal article" date="2007" name="Hum. Mutat.">
        <title>Characterization of a familial t(16;22) balanced translocation associated with congenital cataract leads to identification of a novel gene, TMEM114, expressed in the lens and disrupted by the translocation.</title>
        <authorList>
            <person name="Jamieson R.V."/>
            <person name="Farrar N."/>
            <person name="Stewart K."/>
            <person name="Perveen R."/>
            <person name="Mihelec M."/>
            <person name="Carette M."/>
            <person name="Grigg J.R."/>
            <person name="McAvoy J.W."/>
            <person name="Lovicu F.J."/>
            <person name="Tam P.P.L."/>
            <person name="Scambler P."/>
            <person name="Lloyd I.C."/>
            <person name="Donnai D."/>
            <person name="Black G.C.M."/>
        </authorList>
    </citation>
    <scope>NUCLEOTIDE SEQUENCE [GENOMIC DNA] OF 1-73</scope>
    <scope>VARIANTS THR-35; VAL-147 AND LEU-206</scope>
    <scope>CHROMOSOMAL TRANSLOCATION</scope>
</reference>
<reference key="2">
    <citation type="journal article" date="2002" name="Mol. Vis.">
        <title>Expressed sequence tag analysis of adult human lens for the NEIBank project: over 2000 non-redundant transcripts, novel genes and splice variants.</title>
        <authorList>
            <person name="Wistow G."/>
            <person name="Bernstein S.L."/>
            <person name="Wyatt M.K."/>
            <person name="Behal A."/>
            <person name="Touchman J.W."/>
            <person name="Bouffard G."/>
            <person name="Smith D."/>
            <person name="Peterson K."/>
        </authorList>
    </citation>
    <scope>NUCLEOTIDE SEQUENCE [LARGE SCALE MRNA] OF 26-223</scope>
    <source>
        <tissue>Lens</tissue>
    </source>
</reference>
<reference evidence="7" key="3">
    <citation type="journal article" date="2004" name="Genome Res.">
        <title>The status, quality, and expansion of the NIH full-length cDNA project: the Mammalian Gene Collection (MGC).</title>
        <authorList>
            <consortium name="The MGC Project Team"/>
        </authorList>
    </citation>
    <scope>NUCLEOTIDE SEQUENCE [LARGE SCALE MRNA] OF 102-223</scope>
</reference>
<reference key="4">
    <citation type="journal article" date="2011" name="FEBS Lett.">
        <title>Predicted expansion of the claudin multigene family.</title>
        <authorList>
            <person name="Mineta K."/>
            <person name="Yamamoto Y."/>
            <person name="Yamazaki Y."/>
            <person name="Tanaka H."/>
            <person name="Tada Y."/>
            <person name="Saito K."/>
            <person name="Tamura A."/>
            <person name="Igarashi M."/>
            <person name="Endo T."/>
            <person name="Takeuchi K."/>
            <person name="Tsukita S."/>
        </authorList>
    </citation>
    <scope>IDENTIFICATION</scope>
</reference>
<reference key="5">
    <citation type="journal article" date="2011" name="FEBS Lett.">
        <title>The cataract-associated protein TMEM114, and TMEM235, are glycosylated transmembrane proteins that are distinct from claudin family members.</title>
        <authorList>
            <person name="Maher G.J."/>
            <person name="Hilton E.N."/>
            <person name="Urquhart J.E."/>
            <person name="Davidson A.E."/>
            <person name="Spencer H.L."/>
            <person name="Black G.C."/>
            <person name="Manson F.D."/>
        </authorList>
    </citation>
    <scope>DEVELOPMENTAL STAGE</scope>
</reference>
<feature type="chain" id="PRO_0000352759" description="Transmembrane protein 114">
    <location>
        <begin position="1"/>
        <end position="223"/>
    </location>
</feature>
<feature type="transmembrane region" description="Helical" evidence="3">
    <location>
        <begin position="7"/>
        <end position="27"/>
    </location>
</feature>
<feature type="transmembrane region" description="Helical" evidence="3">
    <location>
        <begin position="106"/>
        <end position="126"/>
    </location>
</feature>
<feature type="transmembrane region" description="Helical" evidence="3">
    <location>
        <begin position="134"/>
        <end position="154"/>
    </location>
</feature>
<feature type="transmembrane region" description="Helical" evidence="3">
    <location>
        <begin position="189"/>
        <end position="209"/>
    </location>
</feature>
<feature type="glycosylation site" description="N-linked (GlcNAc...) asparagine" evidence="1">
    <location>
        <position position="55"/>
    </location>
</feature>
<feature type="glycosylation site" description="N-linked (GlcNAc...) asparagine" evidence="1">
    <location>
        <position position="89"/>
    </location>
</feature>
<feature type="sequence variant" id="VAR_058707" description="In dbSNP:rs1048548807." evidence="4">
    <original>I</original>
    <variation>T</variation>
    <location>
        <position position="35"/>
    </location>
</feature>
<feature type="sequence variant" id="VAR_058708" description="In dbSNP:rs141472774." evidence="4">
    <original>A</original>
    <variation>V</variation>
    <location>
        <position position="147"/>
    </location>
</feature>
<feature type="sequence variant" id="VAR_058709" evidence="4">
    <original>F</original>
    <variation>L</variation>
    <location>
        <position position="206"/>
    </location>
</feature>
<feature type="sequence conflict" description="In Ref. 2; BF727259." evidence="7" ref="2">
    <original>A</original>
    <variation>P</variation>
    <location>
        <position position="205"/>
    </location>
</feature>
<proteinExistence type="evidence at protein level"/>
<evidence type="ECO:0000250" key="1"/>
<evidence type="ECO:0000250" key="2">
    <source>
        <dbReference type="UniProtKB" id="Q9D563"/>
    </source>
</evidence>
<evidence type="ECO:0000255" key="3"/>
<evidence type="ECO:0000269" key="4">
    <source>
    </source>
</evidence>
<evidence type="ECO:0000269" key="5">
    <source>
    </source>
</evidence>
<evidence type="ECO:0000303" key="6">
    <source>
    </source>
</evidence>
<evidence type="ECO:0000305" key="7"/>
<evidence type="ECO:0000312" key="8">
    <source>
        <dbReference type="EMBL" id="ABN55916.1"/>
    </source>
</evidence>
<evidence type="ECO:0000312" key="9">
    <source>
        <dbReference type="HGNC" id="HGNC:33227"/>
    </source>
</evidence>